<name>RF3_PSEU2</name>
<organism>
    <name type="scientific">Pseudomonas syringae pv. syringae (strain B728a)</name>
    <dbReference type="NCBI Taxonomy" id="205918"/>
    <lineage>
        <taxon>Bacteria</taxon>
        <taxon>Pseudomonadati</taxon>
        <taxon>Pseudomonadota</taxon>
        <taxon>Gammaproteobacteria</taxon>
        <taxon>Pseudomonadales</taxon>
        <taxon>Pseudomonadaceae</taxon>
        <taxon>Pseudomonas</taxon>
        <taxon>Pseudomonas syringae</taxon>
    </lineage>
</organism>
<proteinExistence type="inferred from homology"/>
<comment type="function">
    <text evidence="1">Increases the formation of ribosomal termination complexes and stimulates activities of RF-1 and RF-2. It binds guanine nucleotides and has strong preference for UGA stop codons. It may interact directly with the ribosome. The stimulation of RF-1 and RF-2 is significantly reduced by GTP and GDP, but not by GMP.</text>
</comment>
<comment type="subcellular location">
    <subcellularLocation>
        <location evidence="1">Cytoplasm</location>
    </subcellularLocation>
</comment>
<comment type="similarity">
    <text evidence="1">Belongs to the TRAFAC class translation factor GTPase superfamily. Classic translation factor GTPase family. PrfC subfamily.</text>
</comment>
<evidence type="ECO:0000255" key="1">
    <source>
        <dbReference type="HAMAP-Rule" id="MF_00072"/>
    </source>
</evidence>
<keyword id="KW-0963">Cytoplasm</keyword>
<keyword id="KW-0342">GTP-binding</keyword>
<keyword id="KW-0547">Nucleotide-binding</keyword>
<keyword id="KW-0648">Protein biosynthesis</keyword>
<reference key="1">
    <citation type="journal article" date="2005" name="Proc. Natl. Acad. Sci. U.S.A.">
        <title>Comparison of the complete genome sequences of Pseudomonas syringae pv. syringae B728a and pv. tomato DC3000.</title>
        <authorList>
            <person name="Feil H."/>
            <person name="Feil W.S."/>
            <person name="Chain P."/>
            <person name="Larimer F."/>
            <person name="Dibartolo G."/>
            <person name="Copeland A."/>
            <person name="Lykidis A."/>
            <person name="Trong S."/>
            <person name="Nolan M."/>
            <person name="Goltsman E."/>
            <person name="Thiel J."/>
            <person name="Malfatti S."/>
            <person name="Loper J.E."/>
            <person name="Lapidus A."/>
            <person name="Detter J.C."/>
            <person name="Land M."/>
            <person name="Richardson P.M."/>
            <person name="Kyrpides N.C."/>
            <person name="Ivanova N."/>
            <person name="Lindow S.E."/>
        </authorList>
    </citation>
    <scope>NUCLEOTIDE SEQUENCE [LARGE SCALE GENOMIC DNA]</scope>
    <source>
        <strain>B728a</strain>
    </source>
</reference>
<sequence length="527" mass="59720">MTQQAAEVAKRRTFAIISHPDAGKTTITEKLLLMGKAISVAGTVKSRKSDRHATSDWMEMEKQRGISITTSVMQFPYRDHMINLLDTPGHEDFSEDTYRTLTAVDSALMVLDGGKGVEPRTIALMDVCRLRDTPIVSFINKLDRDIRDPIELLDEIEAVLKIKAAPITWPIGCYRDFKGVYHLADDYIIVYTAGHGHERTETKIIEKLDSDEARAHLGDEYERFVEQLELVQGACHEFNQQEFIDGQLTPVFFGTALGNFGVDHVLDAVVNWAPKPLARVANERTVEPAEEKFSGFVFKIQANMDPKHRDRIAFMRICSGRYDKGMKMRHVRLGKDVRIGDALTFFSSEREQLEEAYAGDIIGLHNHGTIQIGDTFTEGEALGFTGIPHFAPELFRRVRLKDPLKSKQLRQGLQQLAEEGATQVFFPQRSNDIILGAVGVLQFDVVASRLKEEYKVECAYEPITVWSARWIDCDDKKKLEEFENKAVENLAVDGGGHLTYLAPTRVNLALMEERWPDVKFRATREHH</sequence>
<protein>
    <recommendedName>
        <fullName evidence="1">Peptide chain release factor 3</fullName>
        <shortName evidence="1">RF-3</shortName>
    </recommendedName>
</protein>
<feature type="chain" id="PRO_0000242199" description="Peptide chain release factor 3">
    <location>
        <begin position="1"/>
        <end position="527"/>
    </location>
</feature>
<feature type="domain" description="tr-type G">
    <location>
        <begin position="9"/>
        <end position="277"/>
    </location>
</feature>
<feature type="binding site" evidence="1">
    <location>
        <begin position="18"/>
        <end position="25"/>
    </location>
    <ligand>
        <name>GTP</name>
        <dbReference type="ChEBI" id="CHEBI:37565"/>
    </ligand>
</feature>
<feature type="binding site" evidence="1">
    <location>
        <begin position="86"/>
        <end position="90"/>
    </location>
    <ligand>
        <name>GTP</name>
        <dbReference type="ChEBI" id="CHEBI:37565"/>
    </ligand>
</feature>
<feature type="binding site" evidence="1">
    <location>
        <begin position="140"/>
        <end position="143"/>
    </location>
    <ligand>
        <name>GTP</name>
        <dbReference type="ChEBI" id="CHEBI:37565"/>
    </ligand>
</feature>
<accession>Q4ZNI9</accession>
<dbReference type="EMBL" id="CP000075">
    <property type="protein sequence ID" value="AAY39283.1"/>
    <property type="molecule type" value="Genomic_DNA"/>
</dbReference>
<dbReference type="RefSeq" id="WP_003396266.1">
    <property type="nucleotide sequence ID" value="NC_007005.1"/>
</dbReference>
<dbReference type="RefSeq" id="YP_237321.1">
    <property type="nucleotide sequence ID" value="NC_007005.1"/>
</dbReference>
<dbReference type="SMR" id="Q4ZNI9"/>
<dbReference type="STRING" id="205918.Psyr_4253"/>
<dbReference type="KEGG" id="psb:Psyr_4253"/>
<dbReference type="PATRIC" id="fig|205918.7.peg.4386"/>
<dbReference type="eggNOG" id="COG4108">
    <property type="taxonomic scope" value="Bacteria"/>
</dbReference>
<dbReference type="HOGENOM" id="CLU_002794_2_1_6"/>
<dbReference type="OrthoDB" id="9801472at2"/>
<dbReference type="Proteomes" id="UP000000426">
    <property type="component" value="Chromosome"/>
</dbReference>
<dbReference type="GO" id="GO:0005829">
    <property type="term" value="C:cytosol"/>
    <property type="evidence" value="ECO:0007669"/>
    <property type="project" value="TreeGrafter"/>
</dbReference>
<dbReference type="GO" id="GO:0005525">
    <property type="term" value="F:GTP binding"/>
    <property type="evidence" value="ECO:0007669"/>
    <property type="project" value="UniProtKB-UniRule"/>
</dbReference>
<dbReference type="GO" id="GO:0003924">
    <property type="term" value="F:GTPase activity"/>
    <property type="evidence" value="ECO:0007669"/>
    <property type="project" value="InterPro"/>
</dbReference>
<dbReference type="GO" id="GO:0097216">
    <property type="term" value="F:guanosine tetraphosphate binding"/>
    <property type="evidence" value="ECO:0007669"/>
    <property type="project" value="UniProtKB-ARBA"/>
</dbReference>
<dbReference type="GO" id="GO:0016150">
    <property type="term" value="F:translation release factor activity, codon nonspecific"/>
    <property type="evidence" value="ECO:0007669"/>
    <property type="project" value="TreeGrafter"/>
</dbReference>
<dbReference type="GO" id="GO:0016149">
    <property type="term" value="F:translation release factor activity, codon specific"/>
    <property type="evidence" value="ECO:0007669"/>
    <property type="project" value="UniProtKB-UniRule"/>
</dbReference>
<dbReference type="GO" id="GO:0006449">
    <property type="term" value="P:regulation of translational termination"/>
    <property type="evidence" value="ECO:0007669"/>
    <property type="project" value="UniProtKB-UniRule"/>
</dbReference>
<dbReference type="CDD" id="cd04169">
    <property type="entry name" value="RF3"/>
    <property type="match status" value="1"/>
</dbReference>
<dbReference type="CDD" id="cd03689">
    <property type="entry name" value="RF3_II"/>
    <property type="match status" value="1"/>
</dbReference>
<dbReference type="CDD" id="cd16259">
    <property type="entry name" value="RF3_III"/>
    <property type="match status" value="1"/>
</dbReference>
<dbReference type="FunFam" id="2.40.30.10:FF:000040">
    <property type="entry name" value="Peptide chain release factor 3"/>
    <property type="match status" value="1"/>
</dbReference>
<dbReference type="FunFam" id="3.30.70.3280:FF:000001">
    <property type="entry name" value="Peptide chain release factor 3"/>
    <property type="match status" value="1"/>
</dbReference>
<dbReference type="FunFam" id="3.40.50.300:FF:000542">
    <property type="entry name" value="Peptide chain release factor 3"/>
    <property type="match status" value="1"/>
</dbReference>
<dbReference type="Gene3D" id="3.40.50.300">
    <property type="entry name" value="P-loop containing nucleotide triphosphate hydrolases"/>
    <property type="match status" value="2"/>
</dbReference>
<dbReference type="Gene3D" id="3.30.70.3280">
    <property type="entry name" value="Peptide chain release factor 3, domain III"/>
    <property type="match status" value="1"/>
</dbReference>
<dbReference type="HAMAP" id="MF_00072">
    <property type="entry name" value="Rel_fac_3"/>
    <property type="match status" value="1"/>
</dbReference>
<dbReference type="InterPro" id="IPR053905">
    <property type="entry name" value="EF-G-like_DII"/>
</dbReference>
<dbReference type="InterPro" id="IPR035647">
    <property type="entry name" value="EFG_III/V"/>
</dbReference>
<dbReference type="InterPro" id="IPR031157">
    <property type="entry name" value="G_TR_CS"/>
</dbReference>
<dbReference type="InterPro" id="IPR027417">
    <property type="entry name" value="P-loop_NTPase"/>
</dbReference>
<dbReference type="InterPro" id="IPR004548">
    <property type="entry name" value="PrfC"/>
</dbReference>
<dbReference type="InterPro" id="IPR032090">
    <property type="entry name" value="RF3_C"/>
</dbReference>
<dbReference type="InterPro" id="IPR038467">
    <property type="entry name" value="RF3_dom_3_sf"/>
</dbReference>
<dbReference type="InterPro" id="IPR041732">
    <property type="entry name" value="RF3_GTP-bd"/>
</dbReference>
<dbReference type="InterPro" id="IPR005225">
    <property type="entry name" value="Small_GTP-bd"/>
</dbReference>
<dbReference type="InterPro" id="IPR000795">
    <property type="entry name" value="T_Tr_GTP-bd_dom"/>
</dbReference>
<dbReference type="InterPro" id="IPR009000">
    <property type="entry name" value="Transl_B-barrel_sf"/>
</dbReference>
<dbReference type="NCBIfam" id="TIGR00503">
    <property type="entry name" value="prfC"/>
    <property type="match status" value="1"/>
</dbReference>
<dbReference type="NCBIfam" id="NF001964">
    <property type="entry name" value="PRK00741.1"/>
    <property type="match status" value="1"/>
</dbReference>
<dbReference type="NCBIfam" id="TIGR00231">
    <property type="entry name" value="small_GTP"/>
    <property type="match status" value="1"/>
</dbReference>
<dbReference type="PANTHER" id="PTHR43556">
    <property type="entry name" value="PEPTIDE CHAIN RELEASE FACTOR RF3"/>
    <property type="match status" value="1"/>
</dbReference>
<dbReference type="PANTHER" id="PTHR43556:SF2">
    <property type="entry name" value="PEPTIDE CHAIN RELEASE FACTOR RF3"/>
    <property type="match status" value="1"/>
</dbReference>
<dbReference type="Pfam" id="PF22042">
    <property type="entry name" value="EF-G_D2"/>
    <property type="match status" value="1"/>
</dbReference>
<dbReference type="Pfam" id="PF00009">
    <property type="entry name" value="GTP_EFTU"/>
    <property type="match status" value="1"/>
</dbReference>
<dbReference type="Pfam" id="PF16658">
    <property type="entry name" value="RF3_C"/>
    <property type="match status" value="1"/>
</dbReference>
<dbReference type="PRINTS" id="PR00315">
    <property type="entry name" value="ELONGATNFCT"/>
</dbReference>
<dbReference type="SUPFAM" id="SSF54980">
    <property type="entry name" value="EF-G C-terminal domain-like"/>
    <property type="match status" value="1"/>
</dbReference>
<dbReference type="SUPFAM" id="SSF52540">
    <property type="entry name" value="P-loop containing nucleoside triphosphate hydrolases"/>
    <property type="match status" value="1"/>
</dbReference>
<dbReference type="SUPFAM" id="SSF50447">
    <property type="entry name" value="Translation proteins"/>
    <property type="match status" value="1"/>
</dbReference>
<dbReference type="PROSITE" id="PS00301">
    <property type="entry name" value="G_TR_1"/>
    <property type="match status" value="1"/>
</dbReference>
<dbReference type="PROSITE" id="PS51722">
    <property type="entry name" value="G_TR_2"/>
    <property type="match status" value="1"/>
</dbReference>
<gene>
    <name evidence="1" type="primary">prfC</name>
    <name type="ordered locus">Psyr_4253</name>
</gene>